<accession>C0HKH6</accession>
<proteinExistence type="evidence at protein level"/>
<evidence type="ECO:0000255" key="1">
    <source>
        <dbReference type="PROSITE-ProRule" id="PRU00395"/>
    </source>
</evidence>
<evidence type="ECO:0000269" key="2">
    <source>
    </source>
</evidence>
<evidence type="ECO:0000303" key="3">
    <source>
    </source>
</evidence>
<evidence type="ECO:0000305" key="4"/>
<sequence>IPCGESCVWIPCISGMFGCSCKDKVCYS</sequence>
<keyword id="KW-0044">Antibiotic</keyword>
<keyword id="KW-0929">Antimicrobial</keyword>
<keyword id="KW-0204">Cytolysis</keyword>
<keyword id="KW-0903">Direct protein sequencing</keyword>
<keyword id="KW-1015">Disulfide bond</keyword>
<keyword id="KW-0354">Hemolysis</keyword>
<keyword id="KW-0960">Knottin</keyword>
<keyword id="KW-0558">Oxidation</keyword>
<keyword id="KW-0611">Plant defense</keyword>
<comment type="function">
    <text evidence="1 2">Chassatide C11: Probably participates in a plant defense mechanism (Probable). Active against E.coli ATCC 25922 (MIC=8.5 uM) but not against S.aureus ATCC 12600 or S.epidermidis ATCC 14990 (PubMed:22467870). Has cytotoxic and hemolytic activity (PubMed:22467870).</text>
</comment>
<comment type="function">
    <text evidence="1 2">Chassatide C11A: Probably participates in a plant defense mechanism (Probable). Has no activity against bacteria up to a concentration of 80 uM (PubMed:22467870). Has no cytotoxic and no hemolytic activity (PubMed:22467870).</text>
</comment>
<comment type="tissue specificity">
    <text evidence="2">Expressed in fruit, pedicel and stem but not in leaf and root (at protein level).</text>
</comment>
<comment type="domain">
    <text evidence="4">The presence of a 'disulfide through disulfide knot' structurally defines this protein as a knottin.</text>
</comment>
<comment type="mass spectrometry"/>
<comment type="mass spectrometry">
    <text>Chassatide cha11A.</text>
</comment>
<comment type="similarity">
    <text evidence="1">Belongs to the cyclotide family. Bracelet subfamily.</text>
</comment>
<comment type="caution">
    <text evidence="2">This peptide is linear as it lacks the C-terminal Asp/Asn residue required for cyclization.</text>
</comment>
<feature type="peptide" id="PRO_0000440234" description="Chassatide C11" evidence="2">
    <location>
        <begin position="1"/>
        <end position="28"/>
    </location>
</feature>
<feature type="modified residue" description="Methionine sulfoxide; in form chassatide chaC11A" evidence="2">
    <location>
        <position position="16"/>
    </location>
</feature>
<feature type="disulfide bond" evidence="1">
    <location>
        <begin position="3"/>
        <end position="19"/>
    </location>
</feature>
<feature type="disulfide bond" evidence="1">
    <location>
        <begin position="7"/>
        <end position="21"/>
    </location>
</feature>
<feature type="disulfide bond" evidence="1">
    <location>
        <begin position="12"/>
        <end position="26"/>
    </location>
</feature>
<dbReference type="SMR" id="C0HKH6"/>
<dbReference type="GO" id="GO:0050830">
    <property type="term" value="P:defense response to Gram-positive bacterium"/>
    <property type="evidence" value="ECO:0000314"/>
    <property type="project" value="UniProtKB"/>
</dbReference>
<dbReference type="GO" id="GO:0031640">
    <property type="term" value="P:killing of cells of another organism"/>
    <property type="evidence" value="ECO:0007669"/>
    <property type="project" value="UniProtKB-KW"/>
</dbReference>
<dbReference type="InterPro" id="IPR005535">
    <property type="entry name" value="Cyclotide"/>
</dbReference>
<dbReference type="InterPro" id="IPR012323">
    <property type="entry name" value="Cyclotide_bracelet_CS"/>
</dbReference>
<dbReference type="InterPro" id="IPR036146">
    <property type="entry name" value="Cyclotide_sf"/>
</dbReference>
<dbReference type="Pfam" id="PF03784">
    <property type="entry name" value="Cyclotide"/>
    <property type="match status" value="1"/>
</dbReference>
<dbReference type="PIRSF" id="PIRSF037891">
    <property type="entry name" value="Cycloviolacin"/>
    <property type="match status" value="1"/>
</dbReference>
<dbReference type="SUPFAM" id="SSF57038">
    <property type="entry name" value="Cyclotides"/>
    <property type="match status" value="1"/>
</dbReference>
<dbReference type="PROSITE" id="PS51052">
    <property type="entry name" value="CYCLOTIDE"/>
    <property type="match status" value="1"/>
</dbReference>
<dbReference type="PROSITE" id="PS60008">
    <property type="entry name" value="CYCLOTIDE_BRACELET"/>
    <property type="match status" value="1"/>
</dbReference>
<protein>
    <recommendedName>
        <fullName evidence="3">Chassatide C11</fullName>
    </recommendedName>
    <alternativeName>
        <fullName evidence="3">Cyclotide chaC11</fullName>
    </alternativeName>
</protein>
<name>CYC11_CHACT</name>
<reference evidence="4" key="1">
    <citation type="journal article" date="2012" name="J. Biol. Chem.">
        <title>Novel Cyclotides and Uncyclotides with Highly Shortened Precursors from Chassalia chartacea and Effects of Methionine Oxidation on Bioactivities.</title>
        <authorList>
            <person name="Nguyen G.K."/>
            <person name="Lim W.H."/>
            <person name="Nguyen P.Q."/>
            <person name="Tam J.P."/>
        </authorList>
    </citation>
    <scope>PROTEIN SEQUENCE</scope>
    <scope>FUNCTION</scope>
    <scope>TISSUE SPECIFICITY</scope>
    <scope>MASS SPECTROMETRY</scope>
    <scope>IDENTIFICATION BY MASS SPECTROMETRY</scope>
    <scope>OXIDATION AT MET-16</scope>
</reference>
<organism evidence="3">
    <name type="scientific">Chassalia chartacea</name>
    <name type="common">Chassalia curviflora</name>
    <dbReference type="NCBI Taxonomy" id="510798"/>
    <lineage>
        <taxon>Eukaryota</taxon>
        <taxon>Viridiplantae</taxon>
        <taxon>Streptophyta</taxon>
        <taxon>Embryophyta</taxon>
        <taxon>Tracheophyta</taxon>
        <taxon>Spermatophyta</taxon>
        <taxon>Magnoliopsida</taxon>
        <taxon>eudicotyledons</taxon>
        <taxon>Gunneridae</taxon>
        <taxon>Pentapetalae</taxon>
        <taxon>asterids</taxon>
        <taxon>lamiids</taxon>
        <taxon>Gentianales</taxon>
        <taxon>Rubiaceae</taxon>
        <taxon>Rubioideae</taxon>
        <taxon>Palicoureeae</taxon>
        <taxon>Chassalia</taxon>
    </lineage>
</organism>